<name>RL21_STRPF</name>
<sequence>MSTYAIIKTGGKQVKVEVGQAIYVEKIDAEAGAEVTFNEVVLVGGDKTVVGTPVVEGATVVGTVEKQGKQKKVVTFKYKPKKGSHRKQGHRQPYTKVVINAINA</sequence>
<evidence type="ECO:0000255" key="1">
    <source>
        <dbReference type="HAMAP-Rule" id="MF_01363"/>
    </source>
</evidence>
<evidence type="ECO:0000305" key="2"/>
<feature type="chain" id="PRO_0000269400" description="Large ribosomal subunit protein bL21">
    <location>
        <begin position="1"/>
        <end position="104"/>
    </location>
</feature>
<comment type="function">
    <text evidence="1">This protein binds to 23S rRNA in the presence of protein L20.</text>
</comment>
<comment type="subunit">
    <text evidence="1">Part of the 50S ribosomal subunit. Contacts protein L20.</text>
</comment>
<comment type="similarity">
    <text evidence="1">Belongs to the bacterial ribosomal protein bL21 family.</text>
</comment>
<organism>
    <name type="scientific">Streptococcus pyogenes serotype M4 (strain MGAS10750)</name>
    <dbReference type="NCBI Taxonomy" id="370554"/>
    <lineage>
        <taxon>Bacteria</taxon>
        <taxon>Bacillati</taxon>
        <taxon>Bacillota</taxon>
        <taxon>Bacilli</taxon>
        <taxon>Lactobacillales</taxon>
        <taxon>Streptococcaceae</taxon>
        <taxon>Streptococcus</taxon>
    </lineage>
</organism>
<accession>Q1J7A2</accession>
<gene>
    <name evidence="1" type="primary">rplU</name>
    <name type="ordered locus">MGAS10750_Spy0722</name>
</gene>
<keyword id="KW-0687">Ribonucleoprotein</keyword>
<keyword id="KW-0689">Ribosomal protein</keyword>
<keyword id="KW-0694">RNA-binding</keyword>
<keyword id="KW-0699">rRNA-binding</keyword>
<protein>
    <recommendedName>
        <fullName evidence="1">Large ribosomal subunit protein bL21</fullName>
    </recommendedName>
    <alternativeName>
        <fullName evidence="2">50S ribosomal protein L21</fullName>
    </alternativeName>
</protein>
<proteinExistence type="inferred from homology"/>
<reference key="1">
    <citation type="journal article" date="2006" name="Proc. Natl. Acad. Sci. U.S.A.">
        <title>Molecular genetic anatomy of inter- and intraserotype variation in the human bacterial pathogen group A Streptococcus.</title>
        <authorList>
            <person name="Beres S.B."/>
            <person name="Richter E.W."/>
            <person name="Nagiec M.J."/>
            <person name="Sumby P."/>
            <person name="Porcella S.F."/>
            <person name="DeLeo F.R."/>
            <person name="Musser J.M."/>
        </authorList>
    </citation>
    <scope>NUCLEOTIDE SEQUENCE [LARGE SCALE GENOMIC DNA]</scope>
    <source>
        <strain>MGAS10750</strain>
    </source>
</reference>
<dbReference type="EMBL" id="CP000262">
    <property type="protein sequence ID" value="ABF37672.1"/>
    <property type="molecule type" value="Genomic_DNA"/>
</dbReference>
<dbReference type="SMR" id="Q1J7A2"/>
<dbReference type="KEGG" id="spi:MGAS10750_Spy0722"/>
<dbReference type="HOGENOM" id="CLU_061463_3_1_9"/>
<dbReference type="Proteomes" id="UP000002434">
    <property type="component" value="Chromosome"/>
</dbReference>
<dbReference type="GO" id="GO:0005737">
    <property type="term" value="C:cytoplasm"/>
    <property type="evidence" value="ECO:0007669"/>
    <property type="project" value="UniProtKB-ARBA"/>
</dbReference>
<dbReference type="GO" id="GO:1990904">
    <property type="term" value="C:ribonucleoprotein complex"/>
    <property type="evidence" value="ECO:0007669"/>
    <property type="project" value="UniProtKB-KW"/>
</dbReference>
<dbReference type="GO" id="GO:0005840">
    <property type="term" value="C:ribosome"/>
    <property type="evidence" value="ECO:0007669"/>
    <property type="project" value="UniProtKB-KW"/>
</dbReference>
<dbReference type="GO" id="GO:0019843">
    <property type="term" value="F:rRNA binding"/>
    <property type="evidence" value="ECO:0007669"/>
    <property type="project" value="UniProtKB-UniRule"/>
</dbReference>
<dbReference type="GO" id="GO:0003735">
    <property type="term" value="F:structural constituent of ribosome"/>
    <property type="evidence" value="ECO:0007669"/>
    <property type="project" value="InterPro"/>
</dbReference>
<dbReference type="GO" id="GO:0006412">
    <property type="term" value="P:translation"/>
    <property type="evidence" value="ECO:0007669"/>
    <property type="project" value="UniProtKB-UniRule"/>
</dbReference>
<dbReference type="HAMAP" id="MF_01363">
    <property type="entry name" value="Ribosomal_bL21"/>
    <property type="match status" value="1"/>
</dbReference>
<dbReference type="InterPro" id="IPR028909">
    <property type="entry name" value="bL21-like"/>
</dbReference>
<dbReference type="InterPro" id="IPR036164">
    <property type="entry name" value="bL21-like_sf"/>
</dbReference>
<dbReference type="InterPro" id="IPR001787">
    <property type="entry name" value="Ribosomal_bL21"/>
</dbReference>
<dbReference type="InterPro" id="IPR018258">
    <property type="entry name" value="Ribosomal_bL21_CS"/>
</dbReference>
<dbReference type="NCBIfam" id="TIGR00061">
    <property type="entry name" value="L21"/>
    <property type="match status" value="1"/>
</dbReference>
<dbReference type="PANTHER" id="PTHR21349">
    <property type="entry name" value="50S RIBOSOMAL PROTEIN L21"/>
    <property type="match status" value="1"/>
</dbReference>
<dbReference type="PANTHER" id="PTHR21349:SF0">
    <property type="entry name" value="LARGE RIBOSOMAL SUBUNIT PROTEIN BL21M"/>
    <property type="match status" value="1"/>
</dbReference>
<dbReference type="Pfam" id="PF00829">
    <property type="entry name" value="Ribosomal_L21p"/>
    <property type="match status" value="1"/>
</dbReference>
<dbReference type="SUPFAM" id="SSF141091">
    <property type="entry name" value="L21p-like"/>
    <property type="match status" value="1"/>
</dbReference>
<dbReference type="PROSITE" id="PS01169">
    <property type="entry name" value="RIBOSOMAL_L21"/>
    <property type="match status" value="1"/>
</dbReference>